<name>HDT1_SOLCH</name>
<proteinExistence type="evidence at transcript level"/>
<evidence type="ECO:0000250" key="1"/>
<evidence type="ECO:0000255" key="2">
    <source>
        <dbReference type="PROSITE-ProRule" id="PRU00042"/>
    </source>
</evidence>
<evidence type="ECO:0000256" key="3">
    <source>
        <dbReference type="SAM" id="MobiDB-lite"/>
    </source>
</evidence>
<evidence type="ECO:0000269" key="4">
    <source>
    </source>
</evidence>
<evidence type="ECO:0000305" key="5"/>
<organism>
    <name type="scientific">Solanum chacoense</name>
    <name type="common">Chaco potato</name>
    <dbReference type="NCBI Taxonomy" id="4108"/>
    <lineage>
        <taxon>Eukaryota</taxon>
        <taxon>Viridiplantae</taxon>
        <taxon>Streptophyta</taxon>
        <taxon>Embryophyta</taxon>
        <taxon>Tracheophyta</taxon>
        <taxon>Spermatophyta</taxon>
        <taxon>Magnoliopsida</taxon>
        <taxon>eudicotyledons</taxon>
        <taxon>Gunneridae</taxon>
        <taxon>Pentapetalae</taxon>
        <taxon>asterids</taxon>
        <taxon>lamiids</taxon>
        <taxon>Solanales</taxon>
        <taxon>Solanaceae</taxon>
        <taxon>Solanoideae</taxon>
        <taxon>Solaneae</taxon>
        <taxon>Solanum</taxon>
    </lineage>
</organism>
<accession>Q6V9I6</accession>
<gene>
    <name type="primary">HDT1</name>
    <name type="synonym">HD2A</name>
</gene>
<comment type="function">
    <text evidence="1">Mediates the deacetylation of lysine residues on the N-terminal part of the core histones (H2A, H2B, H3 and H4). Histone deacetylation gives a tag for epigenetic repression and plays an important role in transcriptional regulation, cell cycle progression and developmental events (By similarity).</text>
</comment>
<comment type="subcellular location">
    <subcellularLocation>
        <location evidence="1">Nucleus</location>
        <location evidence="1">Nucleolus</location>
    </subcellularLocation>
</comment>
<comment type="tissue specificity">
    <text evidence="4">Predominantly expressed in ovaries. Accumulates predominantly in the micropylar region of the ovule's integument.</text>
</comment>
<comment type="developmental stage">
    <text evidence="4">Expressed during fertilization, while it is repressed during seed development.</text>
</comment>
<comment type="induction">
    <text evidence="4">By fertilization.</text>
</comment>
<comment type="similarity">
    <text evidence="5">Belongs to the histone deacetylase HD2 family.</text>
</comment>
<sequence>MEFWGAEVKSGEPLTVQPGDGMVLHLSQASLGELKKDKSESVCLSVNIDGKKLVLGTLNSEKVPQQQFDLVFDRDFELSHNLKSGSVYFFGYKATNPFEEEEDDEDDYDESDEDIPLTLANSGKPEPKEAGKSNAGKDSASGKQKVRIVEPTKDDEDESSDDDDSDMGEDEDDSDDSEEETPKKAEPAKRRKADSATKTPVTDKKAKLTTPQKTDGKKGGGHVATPHPSKQASKTPKSAGSHHCKPCNRSFGSEGALDSHSKAKHSAGK</sequence>
<feature type="chain" id="PRO_0000195211" description="Histone deacetylase HDT1">
    <location>
        <begin position="1"/>
        <end position="269"/>
    </location>
</feature>
<feature type="zinc finger region" description="C2H2-type" evidence="2">
    <location>
        <begin position="242"/>
        <end position="265"/>
    </location>
</feature>
<feature type="region of interest" description="Disordered" evidence="3">
    <location>
        <begin position="97"/>
        <end position="269"/>
    </location>
</feature>
<feature type="compositionally biased region" description="Acidic residues" evidence="3">
    <location>
        <begin position="98"/>
        <end position="115"/>
    </location>
</feature>
<feature type="compositionally biased region" description="Acidic residues" evidence="3">
    <location>
        <begin position="153"/>
        <end position="179"/>
    </location>
</feature>
<feature type="compositionally biased region" description="Polar residues" evidence="3">
    <location>
        <begin position="228"/>
        <end position="238"/>
    </location>
</feature>
<reference key="1">
    <citation type="journal article" date="2003" name="Plant Mol. Biol.">
        <title>Fertilization induces strong accumulation of a histone deacetylase (HD2) and of other chromatin-remodeling proteins in restricted areas of the ovules.</title>
        <authorList>
            <person name="Lagace M."/>
            <person name="Chantha S.-C."/>
            <person name="Major G."/>
            <person name="Matton D.P."/>
        </authorList>
    </citation>
    <scope>NUCLEOTIDE SEQUENCE [MRNA]</scope>
    <scope>TISSUE SPECIFICITY</scope>
    <scope>DEVELOPMENTAL STAGE</scope>
    <scope>INDUCTION</scope>
</reference>
<dbReference type="EMBL" id="AY346455">
    <property type="protein sequence ID" value="AAQ24532.1"/>
    <property type="molecule type" value="mRNA"/>
</dbReference>
<dbReference type="SMR" id="Q6V9I6"/>
<dbReference type="GO" id="GO:0005730">
    <property type="term" value="C:nucleolus"/>
    <property type="evidence" value="ECO:0007669"/>
    <property type="project" value="UniProtKB-SubCell"/>
</dbReference>
<dbReference type="GO" id="GO:0016787">
    <property type="term" value="F:hydrolase activity"/>
    <property type="evidence" value="ECO:0007669"/>
    <property type="project" value="UniProtKB-KW"/>
</dbReference>
<dbReference type="GO" id="GO:0008270">
    <property type="term" value="F:zinc ion binding"/>
    <property type="evidence" value="ECO:0007669"/>
    <property type="project" value="UniProtKB-KW"/>
</dbReference>
<dbReference type="GO" id="GO:0006325">
    <property type="term" value="P:chromatin organization"/>
    <property type="evidence" value="ECO:0007669"/>
    <property type="project" value="UniProtKB-KW"/>
</dbReference>
<dbReference type="FunFam" id="2.60.120.340:FF:000004">
    <property type="entry name" value="Histone deacetylase HDT1"/>
    <property type="match status" value="1"/>
</dbReference>
<dbReference type="Gene3D" id="2.60.120.340">
    <property type="entry name" value="Nucleoplasmin core domain"/>
    <property type="match status" value="1"/>
</dbReference>
<dbReference type="InterPro" id="IPR041232">
    <property type="entry name" value="NPL"/>
</dbReference>
<dbReference type="InterPro" id="IPR013087">
    <property type="entry name" value="Znf_C2H2_type"/>
</dbReference>
<dbReference type="Pfam" id="PF17800">
    <property type="entry name" value="NPL"/>
    <property type="match status" value="1"/>
</dbReference>
<dbReference type="PROSITE" id="PS00028">
    <property type="entry name" value="ZINC_FINGER_C2H2_1"/>
    <property type="match status" value="1"/>
</dbReference>
<dbReference type="PROSITE" id="PS50157">
    <property type="entry name" value="ZINC_FINGER_C2H2_2"/>
    <property type="match status" value="1"/>
</dbReference>
<protein>
    <recommendedName>
        <fullName>Histone deacetylase HDT1</fullName>
    </recommendedName>
    <alternativeName>
        <fullName>Histone deacetylase 2a</fullName>
        <shortName>HD2a</shortName>
    </alternativeName>
    <alternativeName>
        <fullName>ScHD2a</fullName>
    </alternativeName>
</protein>
<keyword id="KW-0156">Chromatin regulator</keyword>
<keyword id="KW-0378">Hydrolase</keyword>
<keyword id="KW-0479">Metal-binding</keyword>
<keyword id="KW-0539">Nucleus</keyword>
<keyword id="KW-0597">Phosphoprotein</keyword>
<keyword id="KW-0678">Repressor</keyword>
<keyword id="KW-0804">Transcription</keyword>
<keyword id="KW-0805">Transcription regulation</keyword>
<keyword id="KW-0862">Zinc</keyword>
<keyword id="KW-0863">Zinc-finger</keyword>